<comment type="function">
    <text evidence="1">May have a role in the cell cycle.</text>
</comment>
<comment type="subunit">
    <text evidence="1">Homodimer.</text>
</comment>
<comment type="subcellular location">
    <subcellularLocation>
        <location evidence="2">Nucleus</location>
    </subcellularLocation>
</comment>
<comment type="similarity">
    <text evidence="3">Belongs to the E(R) family.</text>
</comment>
<gene>
    <name type="primary">ERH</name>
</gene>
<feature type="initiator methionine" description="Removed" evidence="2">
    <location>
        <position position="1"/>
    </location>
</feature>
<feature type="chain" id="PRO_0000244390" description="Enhancer of rudimentary homolog">
    <location>
        <begin position="2"/>
        <end position="104"/>
    </location>
</feature>
<feature type="modified residue" description="N-acetylserine" evidence="2">
    <location>
        <position position="2"/>
    </location>
</feature>
<feature type="modified residue" description="Phosphothreonine" evidence="2">
    <location>
        <position position="11"/>
    </location>
</feature>
<feature type="cross-link" description="Glycyl lysine isopeptide (Lys-Gly) (interchain with G-Cter in SUMO2)" evidence="2">
    <location>
        <position position="12"/>
    </location>
</feature>
<organism>
    <name type="scientific">Bos taurus</name>
    <name type="common">Bovine</name>
    <dbReference type="NCBI Taxonomy" id="9913"/>
    <lineage>
        <taxon>Eukaryota</taxon>
        <taxon>Metazoa</taxon>
        <taxon>Chordata</taxon>
        <taxon>Craniata</taxon>
        <taxon>Vertebrata</taxon>
        <taxon>Euteleostomi</taxon>
        <taxon>Mammalia</taxon>
        <taxon>Eutheria</taxon>
        <taxon>Laurasiatheria</taxon>
        <taxon>Artiodactyla</taxon>
        <taxon>Ruminantia</taxon>
        <taxon>Pecora</taxon>
        <taxon>Bovidae</taxon>
        <taxon>Bovinae</taxon>
        <taxon>Bos</taxon>
    </lineage>
</organism>
<evidence type="ECO:0000250" key="1"/>
<evidence type="ECO:0000250" key="2">
    <source>
        <dbReference type="UniProtKB" id="P84090"/>
    </source>
</evidence>
<evidence type="ECO:0000305" key="3"/>
<keyword id="KW-0007">Acetylation</keyword>
<keyword id="KW-0131">Cell cycle</keyword>
<keyword id="KW-1017">Isopeptide bond</keyword>
<keyword id="KW-0539">Nucleus</keyword>
<keyword id="KW-0597">Phosphoprotein</keyword>
<keyword id="KW-1185">Reference proteome</keyword>
<keyword id="KW-0832">Ubl conjugation</keyword>
<protein>
    <recommendedName>
        <fullName>Enhancer of rudimentary homolog</fullName>
    </recommendedName>
</protein>
<proteinExistence type="inferred from homology"/>
<accession>Q3SZC0</accession>
<name>ERH_BOVIN</name>
<reference key="1">
    <citation type="submission" date="2005-08" db="EMBL/GenBank/DDBJ databases">
        <authorList>
            <consortium name="NIH - Mammalian Gene Collection (MGC) project"/>
        </authorList>
    </citation>
    <scope>NUCLEOTIDE SEQUENCE [LARGE SCALE MRNA]</scope>
    <source>
        <strain>Crossbred X Angus</strain>
        <tissue>Ileum</tissue>
    </source>
</reference>
<sequence>MSHTILLVQPTKRPEGRTYADYESVNECMEGVCKMYEEHLKRMNPNSPSITYDISQLFDFIDDLADLSCLVYRADTQTYQPYNKDWIKEKIYVLLRRQAQQAGK</sequence>
<dbReference type="EMBL" id="BC102967">
    <property type="protein sequence ID" value="AAI02968.1"/>
    <property type="molecule type" value="mRNA"/>
</dbReference>
<dbReference type="RefSeq" id="NP_001029508.1">
    <property type="nucleotide sequence ID" value="NM_001034336.1"/>
</dbReference>
<dbReference type="SMR" id="Q3SZC0"/>
<dbReference type="FunCoup" id="Q3SZC0">
    <property type="interactions" value="3788"/>
</dbReference>
<dbReference type="STRING" id="9913.ENSBTAP00000023664"/>
<dbReference type="PaxDb" id="9913-ENSBTAP00000023664"/>
<dbReference type="PeptideAtlas" id="Q3SZC0"/>
<dbReference type="Ensembl" id="ENSBTAT00000023664.7">
    <property type="protein sequence ID" value="ENSBTAP00000023664.5"/>
    <property type="gene ID" value="ENSBTAG00000017798.7"/>
</dbReference>
<dbReference type="GeneID" id="508901"/>
<dbReference type="KEGG" id="bta:508901"/>
<dbReference type="CTD" id="2079"/>
<dbReference type="VEuPathDB" id="HostDB:ENSBTAG00000017798"/>
<dbReference type="VGNC" id="VGNC:28581">
    <property type="gene designation" value="ERH"/>
</dbReference>
<dbReference type="eggNOG" id="KOG1766">
    <property type="taxonomic scope" value="Eukaryota"/>
</dbReference>
<dbReference type="GeneTree" id="ENSGT00390000003316"/>
<dbReference type="HOGENOM" id="CLU_125703_1_0_1"/>
<dbReference type="InParanoid" id="Q3SZC0"/>
<dbReference type="OMA" id="ESRTWSD"/>
<dbReference type="OrthoDB" id="9689930at2759"/>
<dbReference type="TreeFam" id="TF314568"/>
<dbReference type="Proteomes" id="UP000009136">
    <property type="component" value="Chromosome 10"/>
</dbReference>
<dbReference type="Bgee" id="ENSBTAG00000017798">
    <property type="expression patterns" value="Expressed in oocyte and 103 other cell types or tissues"/>
</dbReference>
<dbReference type="GO" id="GO:0005634">
    <property type="term" value="C:nucleus"/>
    <property type="evidence" value="ECO:0007669"/>
    <property type="project" value="UniProtKB-SubCell"/>
</dbReference>
<dbReference type="FunFam" id="3.30.2260.10:FF:000001">
    <property type="entry name" value="Enhancer of rudimentary homolog"/>
    <property type="match status" value="1"/>
</dbReference>
<dbReference type="Gene3D" id="3.30.2260.10">
    <property type="entry name" value="Enhancer of rudimentary"/>
    <property type="match status" value="1"/>
</dbReference>
<dbReference type="InterPro" id="IPR035912">
    <property type="entry name" value="EHR_sf"/>
</dbReference>
<dbReference type="InterPro" id="IPR000781">
    <property type="entry name" value="ERH"/>
</dbReference>
<dbReference type="PANTHER" id="PTHR12373">
    <property type="entry name" value="ENHANCER OF RUDIMENTARY ERH"/>
    <property type="match status" value="1"/>
</dbReference>
<dbReference type="PANTHER" id="PTHR12373:SF0">
    <property type="entry name" value="ENHANCER OF RUDIMENTARY HOMOLOG"/>
    <property type="match status" value="1"/>
</dbReference>
<dbReference type="Pfam" id="PF01133">
    <property type="entry name" value="ER"/>
    <property type="match status" value="1"/>
</dbReference>
<dbReference type="PIRSF" id="PIRSF016393">
    <property type="entry name" value="Enh_rudimentary"/>
    <property type="match status" value="1"/>
</dbReference>
<dbReference type="SUPFAM" id="SSF143875">
    <property type="entry name" value="ERH-like"/>
    <property type="match status" value="1"/>
</dbReference>
<dbReference type="PROSITE" id="PS01290">
    <property type="entry name" value="ER"/>
    <property type="match status" value="1"/>
</dbReference>